<proteinExistence type="inferred from homology"/>
<organism>
    <name type="scientific">Bordetella pertussis (strain Tohama I / ATCC BAA-589 / NCTC 13251)</name>
    <dbReference type="NCBI Taxonomy" id="257313"/>
    <lineage>
        <taxon>Bacteria</taxon>
        <taxon>Pseudomonadati</taxon>
        <taxon>Pseudomonadota</taxon>
        <taxon>Betaproteobacteria</taxon>
        <taxon>Burkholderiales</taxon>
        <taxon>Alcaligenaceae</taxon>
        <taxon>Bordetella</taxon>
    </lineage>
</organism>
<reference key="1">
    <citation type="journal article" date="2003" name="Nat. Genet.">
        <title>Comparative analysis of the genome sequences of Bordetella pertussis, Bordetella parapertussis and Bordetella bronchiseptica.</title>
        <authorList>
            <person name="Parkhill J."/>
            <person name="Sebaihia M."/>
            <person name="Preston A."/>
            <person name="Murphy L.D."/>
            <person name="Thomson N.R."/>
            <person name="Harris D.E."/>
            <person name="Holden M.T.G."/>
            <person name="Churcher C.M."/>
            <person name="Bentley S.D."/>
            <person name="Mungall K.L."/>
            <person name="Cerdeno-Tarraga A.-M."/>
            <person name="Temple L."/>
            <person name="James K.D."/>
            <person name="Harris B."/>
            <person name="Quail M.A."/>
            <person name="Achtman M."/>
            <person name="Atkin R."/>
            <person name="Baker S."/>
            <person name="Basham D."/>
            <person name="Bason N."/>
            <person name="Cherevach I."/>
            <person name="Chillingworth T."/>
            <person name="Collins M."/>
            <person name="Cronin A."/>
            <person name="Davis P."/>
            <person name="Doggett J."/>
            <person name="Feltwell T."/>
            <person name="Goble A."/>
            <person name="Hamlin N."/>
            <person name="Hauser H."/>
            <person name="Holroyd S."/>
            <person name="Jagels K."/>
            <person name="Leather S."/>
            <person name="Moule S."/>
            <person name="Norberczak H."/>
            <person name="O'Neil S."/>
            <person name="Ormond D."/>
            <person name="Price C."/>
            <person name="Rabbinowitsch E."/>
            <person name="Rutter S."/>
            <person name="Sanders M."/>
            <person name="Saunders D."/>
            <person name="Seeger K."/>
            <person name="Sharp S."/>
            <person name="Simmonds M."/>
            <person name="Skelton J."/>
            <person name="Squares R."/>
            <person name="Squares S."/>
            <person name="Stevens K."/>
            <person name="Unwin L."/>
            <person name="Whitehead S."/>
            <person name="Barrell B.G."/>
            <person name="Maskell D.J."/>
        </authorList>
    </citation>
    <scope>NUCLEOTIDE SEQUENCE [LARGE SCALE GENOMIC DNA]</scope>
    <source>
        <strain>Tohama I / ATCC BAA-589 / NCTC 13251</strain>
    </source>
</reference>
<protein>
    <recommendedName>
        <fullName>UPF0324 membrane protein BP2808</fullName>
    </recommendedName>
</protein>
<evidence type="ECO:0000255" key="1"/>
<evidence type="ECO:0000305" key="2"/>
<gene>
    <name type="ordered locus">BP2808</name>
</gene>
<feature type="chain" id="PRO_0000157399" description="UPF0324 membrane protein BP2808">
    <location>
        <begin position="1"/>
        <end position="348"/>
    </location>
</feature>
<feature type="transmembrane region" description="Helical" evidence="1">
    <location>
        <begin position="20"/>
        <end position="39"/>
    </location>
</feature>
<feature type="transmembrane region" description="Helical" evidence="1">
    <location>
        <begin position="43"/>
        <end position="62"/>
    </location>
</feature>
<feature type="transmembrane region" description="Helical" evidence="1">
    <location>
        <begin position="98"/>
        <end position="120"/>
    </location>
</feature>
<feature type="transmembrane region" description="Helical" evidence="1">
    <location>
        <begin position="135"/>
        <end position="157"/>
    </location>
</feature>
<feature type="transmembrane region" description="Helical" evidence="1">
    <location>
        <begin position="164"/>
        <end position="186"/>
    </location>
</feature>
<feature type="transmembrane region" description="Helical" evidence="1">
    <location>
        <begin position="196"/>
        <end position="215"/>
    </location>
</feature>
<feature type="transmembrane region" description="Helical" evidence="1">
    <location>
        <begin position="235"/>
        <end position="257"/>
    </location>
</feature>
<feature type="transmembrane region" description="Helical" evidence="1">
    <location>
        <begin position="267"/>
        <end position="286"/>
    </location>
</feature>
<feature type="transmembrane region" description="Helical" evidence="1">
    <location>
        <begin position="299"/>
        <end position="318"/>
    </location>
</feature>
<feature type="transmembrane region" description="Helical" evidence="1">
    <location>
        <begin position="322"/>
        <end position="344"/>
    </location>
</feature>
<dbReference type="EMBL" id="BX640419">
    <property type="protein sequence ID" value="CAE43081.1"/>
    <property type="molecule type" value="Genomic_DNA"/>
</dbReference>
<dbReference type="RefSeq" id="NP_881407.1">
    <property type="nucleotide sequence ID" value="NC_002929.2"/>
</dbReference>
<dbReference type="RefSeq" id="WP_010929220.1">
    <property type="nucleotide sequence ID" value="NZ_CP039022.1"/>
</dbReference>
<dbReference type="STRING" id="257313.BP2808"/>
<dbReference type="PaxDb" id="257313-BP2808"/>
<dbReference type="KEGG" id="bpe:BP2808"/>
<dbReference type="PATRIC" id="fig|257313.5.peg.3030"/>
<dbReference type="eggNOG" id="COG2855">
    <property type="taxonomic scope" value="Bacteria"/>
</dbReference>
<dbReference type="HOGENOM" id="CLU_033541_0_0_4"/>
<dbReference type="Proteomes" id="UP000002676">
    <property type="component" value="Chromosome"/>
</dbReference>
<dbReference type="GO" id="GO:0005886">
    <property type="term" value="C:plasma membrane"/>
    <property type="evidence" value="ECO:0007669"/>
    <property type="project" value="UniProtKB-SubCell"/>
</dbReference>
<dbReference type="InterPro" id="IPR018383">
    <property type="entry name" value="UPF0324_pro"/>
</dbReference>
<dbReference type="InterPro" id="IPR004630">
    <property type="entry name" value="UPF0324_YeiH-like"/>
</dbReference>
<dbReference type="NCBIfam" id="TIGR00698">
    <property type="entry name" value="YeiH family putative sulfate export transporter"/>
    <property type="match status" value="1"/>
</dbReference>
<dbReference type="PANTHER" id="PTHR30106">
    <property type="entry name" value="INNER MEMBRANE PROTEIN YEIH-RELATED"/>
    <property type="match status" value="1"/>
</dbReference>
<dbReference type="PANTHER" id="PTHR30106:SF2">
    <property type="entry name" value="UPF0324 INNER MEMBRANE PROTEIN YEIH"/>
    <property type="match status" value="1"/>
</dbReference>
<dbReference type="Pfam" id="PF03601">
    <property type="entry name" value="Cons_hypoth698"/>
    <property type="match status" value="1"/>
</dbReference>
<comment type="subcellular location">
    <subcellularLocation>
        <location evidence="2">Cell membrane</location>
        <topology evidence="2">Multi-pass membrane protein</topology>
    </subcellularLocation>
</comment>
<comment type="similarity">
    <text evidence="2">Belongs to the UPF0324 family.</text>
</comment>
<accession>Q7VV78</accession>
<name>Y2808_BORPE</name>
<sequence>MTTTTSTLPLPTPWRDKLNGILFVALMAAAVVQLADLPFIRQFGFSPLVVGIVCGMLYGNFLRGTMPADWGAGVHFTARRLLRIAVAFYGLNISIQQIAAVGLPGLAVSVGVVASTLLIGTVAGQRLLGLDRDTAMLTAAGSAICGAAAVLAFEPTLRAAPHKSAVAVATVVLFGTLSMFLYPVIYHAGWLPFDTQALGIYIGGTVHEVAQVVGAASNIDPATTEVATIVKMTRVALLVPVLLVLGFWLRASAAAGADGKSHAKLPVPWFAIGFLVLAIVNSLDILPSDLVTAIRKLDVFVLTMAMTALGIETRFAQIRKAGPRVMALGLVLYAWLVFGGYGIVKLAT</sequence>
<keyword id="KW-1003">Cell membrane</keyword>
<keyword id="KW-0472">Membrane</keyword>
<keyword id="KW-1185">Reference proteome</keyword>
<keyword id="KW-0812">Transmembrane</keyword>
<keyword id="KW-1133">Transmembrane helix</keyword>